<sequence length="143" mass="15997">MDQTLSDFGNVFVFLLLGVVFVAGGYLTARMLRPSRPNPVKNSTYECGEEAVGSSWVKFNIRFYVVALIFIIFDVEVVFLFPWATVFRQLGSFALIEALVFAGILILGLVYAWVKGDLDWVRPTPSVPKMPEMPSPRQSAGRD</sequence>
<dbReference type="EC" id="7.1.1.-" evidence="1"/>
<dbReference type="EMBL" id="CP000096">
    <property type="protein sequence ID" value="ABB23618.1"/>
    <property type="molecule type" value="Genomic_DNA"/>
</dbReference>
<dbReference type="RefSeq" id="WP_011357492.1">
    <property type="nucleotide sequence ID" value="NC_007512.1"/>
</dbReference>
<dbReference type="SMR" id="Q3B4W3"/>
<dbReference type="STRING" id="319225.Plut_0743"/>
<dbReference type="KEGG" id="plt:Plut_0743"/>
<dbReference type="eggNOG" id="COG0838">
    <property type="taxonomic scope" value="Bacteria"/>
</dbReference>
<dbReference type="HOGENOM" id="CLU_119549_1_0_10"/>
<dbReference type="OrthoDB" id="9791970at2"/>
<dbReference type="Proteomes" id="UP000002709">
    <property type="component" value="Chromosome"/>
</dbReference>
<dbReference type="GO" id="GO:0030964">
    <property type="term" value="C:NADH dehydrogenase complex"/>
    <property type="evidence" value="ECO:0007669"/>
    <property type="project" value="TreeGrafter"/>
</dbReference>
<dbReference type="GO" id="GO:0005886">
    <property type="term" value="C:plasma membrane"/>
    <property type="evidence" value="ECO:0007669"/>
    <property type="project" value="UniProtKB-SubCell"/>
</dbReference>
<dbReference type="GO" id="GO:0008137">
    <property type="term" value="F:NADH dehydrogenase (ubiquinone) activity"/>
    <property type="evidence" value="ECO:0007669"/>
    <property type="project" value="InterPro"/>
</dbReference>
<dbReference type="GO" id="GO:0050136">
    <property type="term" value="F:NADH:ubiquinone reductase (non-electrogenic) activity"/>
    <property type="evidence" value="ECO:0007669"/>
    <property type="project" value="UniProtKB-UniRule"/>
</dbReference>
<dbReference type="GO" id="GO:0048038">
    <property type="term" value="F:quinone binding"/>
    <property type="evidence" value="ECO:0007669"/>
    <property type="project" value="UniProtKB-KW"/>
</dbReference>
<dbReference type="Gene3D" id="1.20.58.1610">
    <property type="entry name" value="NADH:ubiquinone/plastoquinone oxidoreductase, chain 3"/>
    <property type="match status" value="1"/>
</dbReference>
<dbReference type="HAMAP" id="MF_01394">
    <property type="entry name" value="NDH1_NuoA"/>
    <property type="match status" value="1"/>
</dbReference>
<dbReference type="InterPro" id="IPR023043">
    <property type="entry name" value="NAD(P)H_OxRDtase_bac/plastid"/>
</dbReference>
<dbReference type="InterPro" id="IPR000440">
    <property type="entry name" value="NADH_UbQ/plastoQ_OxRdtase_su3"/>
</dbReference>
<dbReference type="InterPro" id="IPR038430">
    <property type="entry name" value="NDAH_ubi_oxred_su3_sf"/>
</dbReference>
<dbReference type="PANTHER" id="PTHR11058">
    <property type="entry name" value="NADH-UBIQUINONE OXIDOREDUCTASE CHAIN 3"/>
    <property type="match status" value="1"/>
</dbReference>
<dbReference type="PANTHER" id="PTHR11058:SF9">
    <property type="entry name" value="NADH-UBIQUINONE OXIDOREDUCTASE CHAIN 3"/>
    <property type="match status" value="1"/>
</dbReference>
<dbReference type="Pfam" id="PF00507">
    <property type="entry name" value="Oxidored_q4"/>
    <property type="match status" value="1"/>
</dbReference>
<keyword id="KW-0997">Cell inner membrane</keyword>
<keyword id="KW-1003">Cell membrane</keyword>
<keyword id="KW-0472">Membrane</keyword>
<keyword id="KW-0520">NAD</keyword>
<keyword id="KW-0874">Quinone</keyword>
<keyword id="KW-1185">Reference proteome</keyword>
<keyword id="KW-1278">Translocase</keyword>
<keyword id="KW-0812">Transmembrane</keyword>
<keyword id="KW-1133">Transmembrane helix</keyword>
<keyword id="KW-0813">Transport</keyword>
<reference key="1">
    <citation type="submission" date="2005-08" db="EMBL/GenBank/DDBJ databases">
        <title>Complete sequence of Pelodictyon luteolum DSM 273.</title>
        <authorList>
            <consortium name="US DOE Joint Genome Institute"/>
            <person name="Copeland A."/>
            <person name="Lucas S."/>
            <person name="Lapidus A."/>
            <person name="Barry K."/>
            <person name="Detter J.C."/>
            <person name="Glavina T."/>
            <person name="Hammon N."/>
            <person name="Israni S."/>
            <person name="Pitluck S."/>
            <person name="Bryant D."/>
            <person name="Schmutz J."/>
            <person name="Larimer F."/>
            <person name="Land M."/>
            <person name="Kyrpides N."/>
            <person name="Ivanova N."/>
            <person name="Richardson P."/>
        </authorList>
    </citation>
    <scope>NUCLEOTIDE SEQUENCE [LARGE SCALE GENOMIC DNA]</scope>
    <source>
        <strain>DSM 273 / BCRC 81028 / 2530</strain>
    </source>
</reference>
<gene>
    <name evidence="1" type="primary">nuoA</name>
    <name type="ordered locus">Plut_0743</name>
</gene>
<protein>
    <recommendedName>
        <fullName evidence="1">NADH-quinone oxidoreductase subunit A</fullName>
        <ecNumber evidence="1">7.1.1.-</ecNumber>
    </recommendedName>
    <alternativeName>
        <fullName evidence="1">NADH dehydrogenase I subunit A</fullName>
    </alternativeName>
    <alternativeName>
        <fullName evidence="1">NDH-1 subunit A</fullName>
    </alternativeName>
    <alternativeName>
        <fullName evidence="1">NUO1</fullName>
    </alternativeName>
</protein>
<accession>Q3B4W3</accession>
<evidence type="ECO:0000255" key="1">
    <source>
        <dbReference type="HAMAP-Rule" id="MF_01394"/>
    </source>
</evidence>
<proteinExistence type="inferred from homology"/>
<feature type="chain" id="PRO_0000362712" description="NADH-quinone oxidoreductase subunit A">
    <location>
        <begin position="1"/>
        <end position="143"/>
    </location>
</feature>
<feature type="transmembrane region" description="Helical" evidence="1">
    <location>
        <begin position="8"/>
        <end position="28"/>
    </location>
</feature>
<feature type="transmembrane region" description="Helical" evidence="1">
    <location>
        <begin position="63"/>
        <end position="83"/>
    </location>
</feature>
<feature type="transmembrane region" description="Helical" evidence="1">
    <location>
        <begin position="93"/>
        <end position="113"/>
    </location>
</feature>
<name>NUOA_CHLL3</name>
<comment type="function">
    <text evidence="1">NDH-1 shuttles electrons from NADH, via FMN and iron-sulfur (Fe-S) centers, to quinones in the respiratory chain. The immediate electron acceptor for the enzyme in this species is believed to be a menaquinone. Couples the redox reaction to proton translocation (for every two electrons transferred, four hydrogen ions are translocated across the cytoplasmic membrane), and thus conserves the redox energy in a proton gradient.</text>
</comment>
<comment type="catalytic activity">
    <reaction evidence="1">
        <text>a quinone + NADH + 5 H(+)(in) = a quinol + NAD(+) + 4 H(+)(out)</text>
        <dbReference type="Rhea" id="RHEA:57888"/>
        <dbReference type="ChEBI" id="CHEBI:15378"/>
        <dbReference type="ChEBI" id="CHEBI:24646"/>
        <dbReference type="ChEBI" id="CHEBI:57540"/>
        <dbReference type="ChEBI" id="CHEBI:57945"/>
        <dbReference type="ChEBI" id="CHEBI:132124"/>
    </reaction>
</comment>
<comment type="subunit">
    <text evidence="1">NDH-1 is composed of 14 different subunits. Subunits NuoA, H, J, K, L, M, N constitute the membrane sector of the complex.</text>
</comment>
<comment type="subcellular location">
    <subcellularLocation>
        <location evidence="1">Cell inner membrane</location>
        <topology evidence="1">Multi-pass membrane protein</topology>
    </subcellularLocation>
</comment>
<comment type="similarity">
    <text evidence="1">Belongs to the complex I subunit 3 family.</text>
</comment>
<organism>
    <name type="scientific">Chlorobium luteolum (strain DSM 273 / BCRC 81028 / 2530)</name>
    <name type="common">Pelodictyon luteolum</name>
    <dbReference type="NCBI Taxonomy" id="319225"/>
    <lineage>
        <taxon>Bacteria</taxon>
        <taxon>Pseudomonadati</taxon>
        <taxon>Chlorobiota</taxon>
        <taxon>Chlorobiia</taxon>
        <taxon>Chlorobiales</taxon>
        <taxon>Chlorobiaceae</taxon>
        <taxon>Chlorobium/Pelodictyon group</taxon>
        <taxon>Pelodictyon</taxon>
    </lineage>
</organism>